<proteinExistence type="inferred from homology"/>
<organism>
    <name type="scientific">Shigella dysenteriae serotype 1 (strain Sd197)</name>
    <dbReference type="NCBI Taxonomy" id="300267"/>
    <lineage>
        <taxon>Bacteria</taxon>
        <taxon>Pseudomonadati</taxon>
        <taxon>Pseudomonadota</taxon>
        <taxon>Gammaproteobacteria</taxon>
        <taxon>Enterobacterales</taxon>
        <taxon>Enterobacteriaceae</taxon>
        <taxon>Shigella</taxon>
    </lineage>
</organism>
<dbReference type="EMBL" id="CP000034">
    <property type="protein sequence ID" value="ABB62830.1"/>
    <property type="molecule type" value="Genomic_DNA"/>
</dbReference>
<dbReference type="RefSeq" id="WP_001296310.1">
    <property type="nucleotide sequence ID" value="NC_007606.1"/>
</dbReference>
<dbReference type="RefSeq" id="YP_404321.1">
    <property type="nucleotide sequence ID" value="NC_007606.1"/>
</dbReference>
<dbReference type="SMR" id="Q32CX5"/>
<dbReference type="STRING" id="300267.SDY_2787"/>
<dbReference type="EnsemblBacteria" id="ABB62830">
    <property type="protein sequence ID" value="ABB62830"/>
    <property type="gene ID" value="SDY_2787"/>
</dbReference>
<dbReference type="GeneID" id="93774463"/>
<dbReference type="KEGG" id="sdy:SDY_2787"/>
<dbReference type="PATRIC" id="fig|300267.13.peg.3358"/>
<dbReference type="HOGENOM" id="CLU_057217_6_0_6"/>
<dbReference type="Proteomes" id="UP000002716">
    <property type="component" value="Chromosome"/>
</dbReference>
<dbReference type="GO" id="GO:0005829">
    <property type="term" value="C:cytosol"/>
    <property type="evidence" value="ECO:0007669"/>
    <property type="project" value="TreeGrafter"/>
</dbReference>
<dbReference type="GO" id="GO:0000774">
    <property type="term" value="F:adenyl-nucleotide exchange factor activity"/>
    <property type="evidence" value="ECO:0007669"/>
    <property type="project" value="InterPro"/>
</dbReference>
<dbReference type="GO" id="GO:0042803">
    <property type="term" value="F:protein homodimerization activity"/>
    <property type="evidence" value="ECO:0007669"/>
    <property type="project" value="InterPro"/>
</dbReference>
<dbReference type="GO" id="GO:0051087">
    <property type="term" value="F:protein-folding chaperone binding"/>
    <property type="evidence" value="ECO:0007669"/>
    <property type="project" value="InterPro"/>
</dbReference>
<dbReference type="GO" id="GO:0051082">
    <property type="term" value="F:unfolded protein binding"/>
    <property type="evidence" value="ECO:0007669"/>
    <property type="project" value="TreeGrafter"/>
</dbReference>
<dbReference type="GO" id="GO:0006457">
    <property type="term" value="P:protein folding"/>
    <property type="evidence" value="ECO:0007669"/>
    <property type="project" value="InterPro"/>
</dbReference>
<dbReference type="CDD" id="cd00446">
    <property type="entry name" value="GrpE"/>
    <property type="match status" value="1"/>
</dbReference>
<dbReference type="FunFam" id="2.30.22.10:FF:000001">
    <property type="entry name" value="Protein GrpE"/>
    <property type="match status" value="1"/>
</dbReference>
<dbReference type="FunFam" id="3.90.20.20:FF:000001">
    <property type="entry name" value="Protein GrpE"/>
    <property type="match status" value="1"/>
</dbReference>
<dbReference type="Gene3D" id="3.90.20.20">
    <property type="match status" value="1"/>
</dbReference>
<dbReference type="Gene3D" id="2.30.22.10">
    <property type="entry name" value="Head domain of nucleotide exchange factor GrpE"/>
    <property type="match status" value="1"/>
</dbReference>
<dbReference type="HAMAP" id="MF_01151">
    <property type="entry name" value="GrpE"/>
    <property type="match status" value="1"/>
</dbReference>
<dbReference type="InterPro" id="IPR000740">
    <property type="entry name" value="GrpE"/>
</dbReference>
<dbReference type="InterPro" id="IPR013805">
    <property type="entry name" value="GrpE_coiled_coil"/>
</dbReference>
<dbReference type="InterPro" id="IPR009012">
    <property type="entry name" value="GrpE_head"/>
</dbReference>
<dbReference type="NCBIfam" id="NF007655">
    <property type="entry name" value="PRK10325.1"/>
    <property type="match status" value="1"/>
</dbReference>
<dbReference type="NCBIfam" id="NF010738">
    <property type="entry name" value="PRK14140.1"/>
    <property type="match status" value="1"/>
</dbReference>
<dbReference type="NCBIfam" id="NF010748">
    <property type="entry name" value="PRK14150.1"/>
    <property type="match status" value="1"/>
</dbReference>
<dbReference type="PANTHER" id="PTHR21237">
    <property type="entry name" value="GRPE PROTEIN"/>
    <property type="match status" value="1"/>
</dbReference>
<dbReference type="PANTHER" id="PTHR21237:SF23">
    <property type="entry name" value="GRPE PROTEIN HOMOLOG, MITOCHONDRIAL"/>
    <property type="match status" value="1"/>
</dbReference>
<dbReference type="Pfam" id="PF01025">
    <property type="entry name" value="GrpE"/>
    <property type="match status" value="1"/>
</dbReference>
<dbReference type="PRINTS" id="PR00773">
    <property type="entry name" value="GRPEPROTEIN"/>
</dbReference>
<dbReference type="SUPFAM" id="SSF58014">
    <property type="entry name" value="Coiled-coil domain of nucleotide exchange factor GrpE"/>
    <property type="match status" value="1"/>
</dbReference>
<dbReference type="SUPFAM" id="SSF51064">
    <property type="entry name" value="Head domain of nucleotide exchange factor GrpE"/>
    <property type="match status" value="1"/>
</dbReference>
<dbReference type="PROSITE" id="PS01071">
    <property type="entry name" value="GRPE"/>
    <property type="match status" value="1"/>
</dbReference>
<accession>Q32CX5</accession>
<feature type="chain" id="PRO_1000053640" description="Protein GrpE">
    <location>
        <begin position="1"/>
        <end position="197"/>
    </location>
</feature>
<feature type="region of interest" description="Disordered" evidence="2">
    <location>
        <begin position="1"/>
        <end position="39"/>
    </location>
</feature>
<gene>
    <name evidence="1" type="primary">grpE</name>
    <name type="ordered locus">SDY_2787</name>
</gene>
<keyword id="KW-0143">Chaperone</keyword>
<keyword id="KW-0963">Cytoplasm</keyword>
<keyword id="KW-1185">Reference proteome</keyword>
<keyword id="KW-0346">Stress response</keyword>
<name>GRPE_SHIDS</name>
<reference key="1">
    <citation type="journal article" date="2005" name="Nucleic Acids Res.">
        <title>Genome dynamics and diversity of Shigella species, the etiologic agents of bacillary dysentery.</title>
        <authorList>
            <person name="Yang F."/>
            <person name="Yang J."/>
            <person name="Zhang X."/>
            <person name="Chen L."/>
            <person name="Jiang Y."/>
            <person name="Yan Y."/>
            <person name="Tang X."/>
            <person name="Wang J."/>
            <person name="Xiong Z."/>
            <person name="Dong J."/>
            <person name="Xue Y."/>
            <person name="Zhu Y."/>
            <person name="Xu X."/>
            <person name="Sun L."/>
            <person name="Chen S."/>
            <person name="Nie H."/>
            <person name="Peng J."/>
            <person name="Xu J."/>
            <person name="Wang Y."/>
            <person name="Yuan Z."/>
            <person name="Wen Y."/>
            <person name="Yao Z."/>
            <person name="Shen Y."/>
            <person name="Qiang B."/>
            <person name="Hou Y."/>
            <person name="Yu J."/>
            <person name="Jin Q."/>
        </authorList>
    </citation>
    <scope>NUCLEOTIDE SEQUENCE [LARGE SCALE GENOMIC DNA]</scope>
    <source>
        <strain>Sd197</strain>
    </source>
</reference>
<sequence length="197" mass="21812">MSSKEQKTPEGQAPEEIIMDQHEEIEAVEPEASAEQVDPRDEKIANLEAQLAEAQTRERDGILRVKAEMENLRRRTELDIEKAHKFALEKFINELLPVIDSLDRALEVADKANPDMSAMVEGIELTLKSMLDVVRKFGVEVIAETNVPLDPNVHQAIAMVESDDVAPGNVLGIMQKGYTLNGRTIRAAMVTVAKAKA</sequence>
<comment type="function">
    <text evidence="1">Participates actively in the response to hyperosmotic and heat shock by preventing the aggregation of stress-denatured proteins, in association with DnaK and GrpE. It is the nucleotide exchange factor for DnaK and may function as a thermosensor. Unfolded proteins bind initially to DnaJ; upon interaction with the DnaJ-bound protein, DnaK hydrolyzes its bound ATP, resulting in the formation of a stable complex. GrpE releases ADP from DnaK; ATP binding to DnaK triggers the release of the substrate protein, thus completing the reaction cycle. Several rounds of ATP-dependent interactions between DnaJ, DnaK and GrpE are required for fully efficient folding.</text>
</comment>
<comment type="subunit">
    <text evidence="1">Homodimer.</text>
</comment>
<comment type="subcellular location">
    <subcellularLocation>
        <location evidence="1">Cytoplasm</location>
    </subcellularLocation>
</comment>
<comment type="similarity">
    <text evidence="1">Belongs to the GrpE family.</text>
</comment>
<evidence type="ECO:0000255" key="1">
    <source>
        <dbReference type="HAMAP-Rule" id="MF_01151"/>
    </source>
</evidence>
<evidence type="ECO:0000256" key="2">
    <source>
        <dbReference type="SAM" id="MobiDB-lite"/>
    </source>
</evidence>
<protein>
    <recommendedName>
        <fullName evidence="1">Protein GrpE</fullName>
    </recommendedName>
    <alternativeName>
        <fullName evidence="1">HSP-70 cofactor</fullName>
    </alternativeName>
</protein>